<accession>Q5WF65</accession>
<evidence type="ECO:0000255" key="1">
    <source>
        <dbReference type="HAMAP-Rule" id="MF_00173"/>
    </source>
</evidence>
<gene>
    <name evidence="1" type="primary">argR</name>
    <name type="ordered locus">ABC2460</name>
</gene>
<comment type="function">
    <text evidence="1">Regulates arginine biosynthesis genes.</text>
</comment>
<comment type="pathway">
    <text>Amino-acid biosynthesis; L-arginine biosynthesis [regulation].</text>
</comment>
<comment type="subcellular location">
    <subcellularLocation>
        <location evidence="1">Cytoplasm</location>
    </subcellularLocation>
</comment>
<comment type="similarity">
    <text evidence="1">Belongs to the ArgR family.</text>
</comment>
<organism>
    <name type="scientific">Shouchella clausii (strain KSM-K16)</name>
    <name type="common">Alkalihalobacillus clausii</name>
    <dbReference type="NCBI Taxonomy" id="66692"/>
    <lineage>
        <taxon>Bacteria</taxon>
        <taxon>Bacillati</taxon>
        <taxon>Bacillota</taxon>
        <taxon>Bacilli</taxon>
        <taxon>Bacillales</taxon>
        <taxon>Bacillaceae</taxon>
        <taxon>Shouchella</taxon>
    </lineage>
</organism>
<feature type="chain" id="PRO_0000205070" description="Arginine repressor">
    <location>
        <begin position="1"/>
        <end position="149"/>
    </location>
</feature>
<protein>
    <recommendedName>
        <fullName evidence="1">Arginine repressor</fullName>
    </recommendedName>
</protein>
<reference key="1">
    <citation type="submission" date="2003-10" db="EMBL/GenBank/DDBJ databases">
        <title>The complete genome sequence of the alkaliphilic Bacillus clausii KSM-K16.</title>
        <authorList>
            <person name="Takaki Y."/>
            <person name="Kageyama Y."/>
            <person name="Shimamura S."/>
            <person name="Suzuki H."/>
            <person name="Nishi S."/>
            <person name="Hatada Y."/>
            <person name="Kawai S."/>
            <person name="Ito S."/>
            <person name="Horikoshi K."/>
        </authorList>
    </citation>
    <scope>NUCLEOTIDE SEQUENCE [LARGE SCALE GENOMIC DNA]</scope>
    <source>
        <strain>KSM-K16</strain>
    </source>
</reference>
<proteinExistence type="inferred from homology"/>
<name>ARGR_SHOC1</name>
<keyword id="KW-0028">Amino-acid biosynthesis</keyword>
<keyword id="KW-0055">Arginine biosynthesis</keyword>
<keyword id="KW-0963">Cytoplasm</keyword>
<keyword id="KW-0238">DNA-binding</keyword>
<keyword id="KW-1185">Reference proteome</keyword>
<keyword id="KW-0678">Repressor</keyword>
<keyword id="KW-0804">Transcription</keyword>
<keyword id="KW-0805">Transcription regulation</keyword>
<dbReference type="EMBL" id="AP006627">
    <property type="protein sequence ID" value="BAD64995.1"/>
    <property type="molecule type" value="Genomic_DNA"/>
</dbReference>
<dbReference type="RefSeq" id="WP_011247303.1">
    <property type="nucleotide sequence ID" value="NC_006582.1"/>
</dbReference>
<dbReference type="SMR" id="Q5WF65"/>
<dbReference type="STRING" id="66692.ABC2460"/>
<dbReference type="KEGG" id="bcl:ABC2460"/>
<dbReference type="eggNOG" id="COG1438">
    <property type="taxonomic scope" value="Bacteria"/>
</dbReference>
<dbReference type="HOGENOM" id="CLU_097103_3_0_9"/>
<dbReference type="OrthoDB" id="9807089at2"/>
<dbReference type="UniPathway" id="UPA00068"/>
<dbReference type="Proteomes" id="UP000001168">
    <property type="component" value="Chromosome"/>
</dbReference>
<dbReference type="GO" id="GO:0005737">
    <property type="term" value="C:cytoplasm"/>
    <property type="evidence" value="ECO:0007669"/>
    <property type="project" value="UniProtKB-SubCell"/>
</dbReference>
<dbReference type="GO" id="GO:0034618">
    <property type="term" value="F:arginine binding"/>
    <property type="evidence" value="ECO:0007669"/>
    <property type="project" value="InterPro"/>
</dbReference>
<dbReference type="GO" id="GO:0003677">
    <property type="term" value="F:DNA binding"/>
    <property type="evidence" value="ECO:0007669"/>
    <property type="project" value="UniProtKB-KW"/>
</dbReference>
<dbReference type="GO" id="GO:0003700">
    <property type="term" value="F:DNA-binding transcription factor activity"/>
    <property type="evidence" value="ECO:0007669"/>
    <property type="project" value="UniProtKB-UniRule"/>
</dbReference>
<dbReference type="GO" id="GO:0006526">
    <property type="term" value="P:L-arginine biosynthetic process"/>
    <property type="evidence" value="ECO:0007669"/>
    <property type="project" value="UniProtKB-UniPathway"/>
</dbReference>
<dbReference type="GO" id="GO:0051259">
    <property type="term" value="P:protein complex oligomerization"/>
    <property type="evidence" value="ECO:0007669"/>
    <property type="project" value="InterPro"/>
</dbReference>
<dbReference type="GO" id="GO:1900079">
    <property type="term" value="P:regulation of arginine biosynthetic process"/>
    <property type="evidence" value="ECO:0007669"/>
    <property type="project" value="UniProtKB-UniRule"/>
</dbReference>
<dbReference type="FunFam" id="3.30.1360.40:FF:000006">
    <property type="entry name" value="Arginine repressor"/>
    <property type="match status" value="1"/>
</dbReference>
<dbReference type="Gene3D" id="3.30.1360.40">
    <property type="match status" value="1"/>
</dbReference>
<dbReference type="Gene3D" id="1.10.10.10">
    <property type="entry name" value="Winged helix-like DNA-binding domain superfamily/Winged helix DNA-binding domain"/>
    <property type="match status" value="1"/>
</dbReference>
<dbReference type="HAMAP" id="MF_00173">
    <property type="entry name" value="Arg_repressor"/>
    <property type="match status" value="1"/>
</dbReference>
<dbReference type="InterPro" id="IPR001669">
    <property type="entry name" value="Arg_repress"/>
</dbReference>
<dbReference type="InterPro" id="IPR020899">
    <property type="entry name" value="Arg_repress_C"/>
</dbReference>
<dbReference type="InterPro" id="IPR036251">
    <property type="entry name" value="Arg_repress_C_sf"/>
</dbReference>
<dbReference type="InterPro" id="IPR020900">
    <property type="entry name" value="Arg_repress_DNA-bd"/>
</dbReference>
<dbReference type="InterPro" id="IPR036388">
    <property type="entry name" value="WH-like_DNA-bd_sf"/>
</dbReference>
<dbReference type="InterPro" id="IPR036390">
    <property type="entry name" value="WH_DNA-bd_sf"/>
</dbReference>
<dbReference type="NCBIfam" id="TIGR01529">
    <property type="entry name" value="argR_whole"/>
    <property type="match status" value="1"/>
</dbReference>
<dbReference type="NCBIfam" id="NF003281">
    <property type="entry name" value="PRK04280.1"/>
    <property type="match status" value="1"/>
</dbReference>
<dbReference type="PANTHER" id="PTHR34471">
    <property type="entry name" value="ARGININE REPRESSOR"/>
    <property type="match status" value="1"/>
</dbReference>
<dbReference type="PANTHER" id="PTHR34471:SF1">
    <property type="entry name" value="ARGININE REPRESSOR"/>
    <property type="match status" value="1"/>
</dbReference>
<dbReference type="Pfam" id="PF01316">
    <property type="entry name" value="Arg_repressor"/>
    <property type="match status" value="1"/>
</dbReference>
<dbReference type="Pfam" id="PF02863">
    <property type="entry name" value="Arg_repressor_C"/>
    <property type="match status" value="1"/>
</dbReference>
<dbReference type="PRINTS" id="PR01467">
    <property type="entry name" value="ARGREPRESSOR"/>
</dbReference>
<dbReference type="SUPFAM" id="SSF55252">
    <property type="entry name" value="C-terminal domain of arginine repressor"/>
    <property type="match status" value="1"/>
</dbReference>
<dbReference type="SUPFAM" id="SSF46785">
    <property type="entry name" value="Winged helix' DNA-binding domain"/>
    <property type="match status" value="1"/>
</dbReference>
<sequence>MNKGQRHIKIREIITNYEIETQDDLVDRLKSDGYNVTQATVSRDIKELHLVKVPLQDGRYKYSLPADQKFNPQQKLKRILTDSFISIDRTGNLVVMKAMPGNANAIAVLIDNLDWNELMGTICGDDTILIICRTERDGQVVTERFLNML</sequence>